<name>METK_GEOSM</name>
<feature type="chain" id="PRO_1000202618" description="S-adenosylmethionine synthase">
    <location>
        <begin position="1"/>
        <end position="389"/>
    </location>
</feature>
<feature type="region of interest" description="Flexible loop" evidence="1">
    <location>
        <begin position="101"/>
        <end position="111"/>
    </location>
</feature>
<feature type="binding site" description="in other chain" evidence="1">
    <location>
        <position position="17"/>
    </location>
    <ligand>
        <name>ATP</name>
        <dbReference type="ChEBI" id="CHEBI:30616"/>
        <note>ligand shared between two neighboring subunits</note>
    </ligand>
</feature>
<feature type="binding site" evidence="1">
    <location>
        <position position="19"/>
    </location>
    <ligand>
        <name>Mg(2+)</name>
        <dbReference type="ChEBI" id="CHEBI:18420"/>
    </ligand>
</feature>
<feature type="binding site" evidence="1">
    <location>
        <position position="45"/>
    </location>
    <ligand>
        <name>K(+)</name>
        <dbReference type="ChEBI" id="CHEBI:29103"/>
    </ligand>
</feature>
<feature type="binding site" description="in other chain" evidence="1">
    <location>
        <position position="58"/>
    </location>
    <ligand>
        <name>L-methionine</name>
        <dbReference type="ChEBI" id="CHEBI:57844"/>
        <note>ligand shared between two neighboring subunits</note>
    </ligand>
</feature>
<feature type="binding site" description="in other chain" evidence="1">
    <location>
        <position position="101"/>
    </location>
    <ligand>
        <name>L-methionine</name>
        <dbReference type="ChEBI" id="CHEBI:57844"/>
        <note>ligand shared between two neighboring subunits</note>
    </ligand>
</feature>
<feature type="binding site" description="in other chain" evidence="1">
    <location>
        <begin position="168"/>
        <end position="170"/>
    </location>
    <ligand>
        <name>ATP</name>
        <dbReference type="ChEBI" id="CHEBI:30616"/>
        <note>ligand shared between two neighboring subunits</note>
    </ligand>
</feature>
<feature type="binding site" description="in other chain" evidence="1">
    <location>
        <begin position="234"/>
        <end position="235"/>
    </location>
    <ligand>
        <name>ATP</name>
        <dbReference type="ChEBI" id="CHEBI:30616"/>
        <note>ligand shared between two neighboring subunits</note>
    </ligand>
</feature>
<feature type="binding site" evidence="1">
    <location>
        <position position="243"/>
    </location>
    <ligand>
        <name>ATP</name>
        <dbReference type="ChEBI" id="CHEBI:30616"/>
        <note>ligand shared between two neighboring subunits</note>
    </ligand>
</feature>
<feature type="binding site" evidence="1">
    <location>
        <position position="243"/>
    </location>
    <ligand>
        <name>L-methionine</name>
        <dbReference type="ChEBI" id="CHEBI:57844"/>
        <note>ligand shared between two neighboring subunits</note>
    </ligand>
</feature>
<feature type="binding site" description="in other chain" evidence="1">
    <location>
        <begin position="249"/>
        <end position="250"/>
    </location>
    <ligand>
        <name>ATP</name>
        <dbReference type="ChEBI" id="CHEBI:30616"/>
        <note>ligand shared between two neighboring subunits</note>
    </ligand>
</feature>
<feature type="binding site" evidence="1">
    <location>
        <position position="266"/>
    </location>
    <ligand>
        <name>ATP</name>
        <dbReference type="ChEBI" id="CHEBI:30616"/>
        <note>ligand shared between two neighboring subunits</note>
    </ligand>
</feature>
<feature type="binding site" evidence="1">
    <location>
        <position position="270"/>
    </location>
    <ligand>
        <name>ATP</name>
        <dbReference type="ChEBI" id="CHEBI:30616"/>
        <note>ligand shared between two neighboring subunits</note>
    </ligand>
</feature>
<feature type="binding site" description="in other chain" evidence="1">
    <location>
        <position position="274"/>
    </location>
    <ligand>
        <name>L-methionine</name>
        <dbReference type="ChEBI" id="CHEBI:57844"/>
        <note>ligand shared between two neighboring subunits</note>
    </ligand>
</feature>
<gene>
    <name evidence="1" type="primary">metK</name>
    <name type="ordered locus">GM21_2943</name>
</gene>
<dbReference type="EC" id="2.5.1.6" evidence="1"/>
<dbReference type="EMBL" id="CP001661">
    <property type="protein sequence ID" value="ACT18972.1"/>
    <property type="molecule type" value="Genomic_DNA"/>
</dbReference>
<dbReference type="SMR" id="C6E2L2"/>
<dbReference type="STRING" id="443144.GM21_2943"/>
<dbReference type="KEGG" id="gem:GM21_2943"/>
<dbReference type="eggNOG" id="COG0192">
    <property type="taxonomic scope" value="Bacteria"/>
</dbReference>
<dbReference type="HOGENOM" id="CLU_041802_1_1_7"/>
<dbReference type="OrthoDB" id="9801686at2"/>
<dbReference type="UniPathway" id="UPA00315">
    <property type="reaction ID" value="UER00080"/>
</dbReference>
<dbReference type="GO" id="GO:0005737">
    <property type="term" value="C:cytoplasm"/>
    <property type="evidence" value="ECO:0007669"/>
    <property type="project" value="UniProtKB-SubCell"/>
</dbReference>
<dbReference type="GO" id="GO:0005524">
    <property type="term" value="F:ATP binding"/>
    <property type="evidence" value="ECO:0007669"/>
    <property type="project" value="UniProtKB-UniRule"/>
</dbReference>
<dbReference type="GO" id="GO:0000287">
    <property type="term" value="F:magnesium ion binding"/>
    <property type="evidence" value="ECO:0007669"/>
    <property type="project" value="UniProtKB-UniRule"/>
</dbReference>
<dbReference type="GO" id="GO:0004478">
    <property type="term" value="F:methionine adenosyltransferase activity"/>
    <property type="evidence" value="ECO:0007669"/>
    <property type="project" value="UniProtKB-UniRule"/>
</dbReference>
<dbReference type="GO" id="GO:0006730">
    <property type="term" value="P:one-carbon metabolic process"/>
    <property type="evidence" value="ECO:0007669"/>
    <property type="project" value="UniProtKB-KW"/>
</dbReference>
<dbReference type="GO" id="GO:0006556">
    <property type="term" value="P:S-adenosylmethionine biosynthetic process"/>
    <property type="evidence" value="ECO:0007669"/>
    <property type="project" value="UniProtKB-UniRule"/>
</dbReference>
<dbReference type="CDD" id="cd18079">
    <property type="entry name" value="S-AdoMet_synt"/>
    <property type="match status" value="1"/>
</dbReference>
<dbReference type="FunFam" id="3.30.300.10:FF:000001">
    <property type="entry name" value="S-adenosylmethionine synthase"/>
    <property type="match status" value="1"/>
</dbReference>
<dbReference type="FunFam" id="3.30.300.10:FF:000003">
    <property type="entry name" value="S-adenosylmethionine synthase"/>
    <property type="match status" value="1"/>
</dbReference>
<dbReference type="FunFam" id="3.30.300.10:FF:000004">
    <property type="entry name" value="S-adenosylmethionine synthase"/>
    <property type="match status" value="1"/>
</dbReference>
<dbReference type="Gene3D" id="3.30.300.10">
    <property type="match status" value="3"/>
</dbReference>
<dbReference type="HAMAP" id="MF_00086">
    <property type="entry name" value="S_AdoMet_synth1"/>
    <property type="match status" value="1"/>
</dbReference>
<dbReference type="InterPro" id="IPR022631">
    <property type="entry name" value="ADOMET_SYNTHASE_CS"/>
</dbReference>
<dbReference type="InterPro" id="IPR022630">
    <property type="entry name" value="S-AdoMet_synt_C"/>
</dbReference>
<dbReference type="InterPro" id="IPR022629">
    <property type="entry name" value="S-AdoMet_synt_central"/>
</dbReference>
<dbReference type="InterPro" id="IPR022628">
    <property type="entry name" value="S-AdoMet_synt_N"/>
</dbReference>
<dbReference type="InterPro" id="IPR002133">
    <property type="entry name" value="S-AdoMet_synthetase"/>
</dbReference>
<dbReference type="InterPro" id="IPR022636">
    <property type="entry name" value="S-AdoMet_synthetase_sfam"/>
</dbReference>
<dbReference type="NCBIfam" id="TIGR01034">
    <property type="entry name" value="metK"/>
    <property type="match status" value="1"/>
</dbReference>
<dbReference type="PANTHER" id="PTHR11964">
    <property type="entry name" value="S-ADENOSYLMETHIONINE SYNTHETASE"/>
    <property type="match status" value="1"/>
</dbReference>
<dbReference type="Pfam" id="PF02773">
    <property type="entry name" value="S-AdoMet_synt_C"/>
    <property type="match status" value="1"/>
</dbReference>
<dbReference type="Pfam" id="PF02772">
    <property type="entry name" value="S-AdoMet_synt_M"/>
    <property type="match status" value="1"/>
</dbReference>
<dbReference type="Pfam" id="PF00438">
    <property type="entry name" value="S-AdoMet_synt_N"/>
    <property type="match status" value="1"/>
</dbReference>
<dbReference type="PIRSF" id="PIRSF000497">
    <property type="entry name" value="MAT"/>
    <property type="match status" value="1"/>
</dbReference>
<dbReference type="SUPFAM" id="SSF55973">
    <property type="entry name" value="S-adenosylmethionine synthetase"/>
    <property type="match status" value="3"/>
</dbReference>
<dbReference type="PROSITE" id="PS00376">
    <property type="entry name" value="ADOMET_SYNTHASE_1"/>
    <property type="match status" value="1"/>
</dbReference>
<dbReference type="PROSITE" id="PS00377">
    <property type="entry name" value="ADOMET_SYNTHASE_2"/>
    <property type="match status" value="1"/>
</dbReference>
<keyword id="KW-0067">ATP-binding</keyword>
<keyword id="KW-0963">Cytoplasm</keyword>
<keyword id="KW-0460">Magnesium</keyword>
<keyword id="KW-0479">Metal-binding</keyword>
<keyword id="KW-0547">Nucleotide-binding</keyword>
<keyword id="KW-0554">One-carbon metabolism</keyword>
<keyword id="KW-0630">Potassium</keyword>
<keyword id="KW-0808">Transferase</keyword>
<comment type="function">
    <text evidence="1">Catalyzes the formation of S-adenosylmethionine (AdoMet) from methionine and ATP. The overall synthetic reaction is composed of two sequential steps, AdoMet formation and the subsequent tripolyphosphate hydrolysis which occurs prior to release of AdoMet from the enzyme.</text>
</comment>
<comment type="catalytic activity">
    <reaction evidence="1">
        <text>L-methionine + ATP + H2O = S-adenosyl-L-methionine + phosphate + diphosphate</text>
        <dbReference type="Rhea" id="RHEA:21080"/>
        <dbReference type="ChEBI" id="CHEBI:15377"/>
        <dbReference type="ChEBI" id="CHEBI:30616"/>
        <dbReference type="ChEBI" id="CHEBI:33019"/>
        <dbReference type="ChEBI" id="CHEBI:43474"/>
        <dbReference type="ChEBI" id="CHEBI:57844"/>
        <dbReference type="ChEBI" id="CHEBI:59789"/>
        <dbReference type="EC" id="2.5.1.6"/>
    </reaction>
</comment>
<comment type="cofactor">
    <cofactor evidence="1">
        <name>Mg(2+)</name>
        <dbReference type="ChEBI" id="CHEBI:18420"/>
    </cofactor>
    <text evidence="1">Binds 2 divalent ions per subunit.</text>
</comment>
<comment type="cofactor">
    <cofactor evidence="1">
        <name>K(+)</name>
        <dbReference type="ChEBI" id="CHEBI:29103"/>
    </cofactor>
    <text evidence="1">Binds 1 potassium ion per subunit.</text>
</comment>
<comment type="pathway">
    <text evidence="1">Amino-acid biosynthesis; S-adenosyl-L-methionine biosynthesis; S-adenosyl-L-methionine from L-methionine: step 1/1.</text>
</comment>
<comment type="subunit">
    <text evidence="1">Homotetramer; dimer of dimers.</text>
</comment>
<comment type="subcellular location">
    <subcellularLocation>
        <location evidence="1">Cytoplasm</location>
    </subcellularLocation>
</comment>
<comment type="similarity">
    <text evidence="1">Belongs to the AdoMet synthase family.</text>
</comment>
<evidence type="ECO:0000255" key="1">
    <source>
        <dbReference type="HAMAP-Rule" id="MF_00086"/>
    </source>
</evidence>
<organism>
    <name type="scientific">Geobacter sp. (strain M21)</name>
    <dbReference type="NCBI Taxonomy" id="443144"/>
    <lineage>
        <taxon>Bacteria</taxon>
        <taxon>Pseudomonadati</taxon>
        <taxon>Thermodesulfobacteriota</taxon>
        <taxon>Desulfuromonadia</taxon>
        <taxon>Geobacterales</taxon>
        <taxon>Geobacteraceae</taxon>
        <taxon>Geobacter</taxon>
    </lineage>
</organism>
<accession>C6E2L2</accession>
<reference key="1">
    <citation type="submission" date="2009-07" db="EMBL/GenBank/DDBJ databases">
        <title>Complete sequence of Geobacter sp. M21.</title>
        <authorList>
            <consortium name="US DOE Joint Genome Institute"/>
            <person name="Lucas S."/>
            <person name="Copeland A."/>
            <person name="Lapidus A."/>
            <person name="Glavina del Rio T."/>
            <person name="Dalin E."/>
            <person name="Tice H."/>
            <person name="Bruce D."/>
            <person name="Goodwin L."/>
            <person name="Pitluck S."/>
            <person name="Saunders E."/>
            <person name="Brettin T."/>
            <person name="Detter J.C."/>
            <person name="Han C."/>
            <person name="Larimer F."/>
            <person name="Land M."/>
            <person name="Hauser L."/>
            <person name="Kyrpides N."/>
            <person name="Ovchinnikova G."/>
            <person name="Lovley D."/>
        </authorList>
    </citation>
    <scope>NUCLEOTIDE SEQUENCE [LARGE SCALE GENOMIC DNA]</scope>
    <source>
        <strain>M21</strain>
    </source>
</reference>
<protein>
    <recommendedName>
        <fullName evidence="1">S-adenosylmethionine synthase</fullName>
        <shortName evidence="1">AdoMet synthase</shortName>
        <ecNumber evidence="1">2.5.1.6</ecNumber>
    </recommendedName>
    <alternativeName>
        <fullName evidence="1">MAT</fullName>
    </alternativeName>
    <alternativeName>
        <fullName evidence="1">Methionine adenosyltransferase</fullName>
    </alternativeName>
</protein>
<sequence>MEMKDFIFTSESVSEGHPDKVADQVSDAILDAILTQDPKSRVACETMVTTGMAVIAGEITTNAIIDYPKIVRETIREIGYNDSAMGFDWETCAVLTSIDKQSPDIAQGVTEGEGMFKEQGAGDQGLMFGFACNETPELMPMSILLAHKLVSRLADVRKAGVLDFLRPDSKSQVSIQYIDDKPVHVDTVVISSQHSPEVSYEMIKEGIIEEVVKKIIPANLMDSKTKFLINPTGRFVIGGPMGDCGLTGRKIIVDSYGGHGAHGGGAFSGKDPSKVDRSAAYMGRYVAKNLVASGVCERCEVQVAYAIGVAEPVSVMVDCNGTGKIPSKRISEIVREVFDMRPRAIIEQLDLLRPIYRKTAAYGHFGRELPEFTWERTDKAAIIREKAGL</sequence>
<proteinExistence type="inferred from homology"/>